<organism>
    <name type="scientific">Staphylococcus aureus (strain bovine RF122 / ET3-1)</name>
    <dbReference type="NCBI Taxonomy" id="273036"/>
    <lineage>
        <taxon>Bacteria</taxon>
        <taxon>Bacillati</taxon>
        <taxon>Bacillota</taxon>
        <taxon>Bacilli</taxon>
        <taxon>Bacillales</taxon>
        <taxon>Staphylococcaceae</taxon>
        <taxon>Staphylococcus</taxon>
    </lineage>
</organism>
<keyword id="KW-0134">Cell wall</keyword>
<keyword id="KW-0349">Heme</keyword>
<keyword id="KW-0408">Iron</keyword>
<keyword id="KW-0479">Metal-binding</keyword>
<keyword id="KW-0572">Peptidoglycan-anchor</keyword>
<keyword id="KW-0964">Secreted</keyword>
<keyword id="KW-0732">Signal</keyword>
<gene>
    <name type="primary">isdC</name>
    <name type="synonym">sirD</name>
    <name type="ordered locus">SAB0995</name>
</gene>
<accession>Q2YX94</accession>
<evidence type="ECO:0000250" key="1"/>
<evidence type="ECO:0000250" key="2">
    <source>
        <dbReference type="UniProtKB" id="Q8KQR1"/>
    </source>
</evidence>
<evidence type="ECO:0000255" key="3"/>
<evidence type="ECO:0000255" key="4">
    <source>
        <dbReference type="PROSITE-ProRule" id="PRU00337"/>
    </source>
</evidence>
<evidence type="ECO:0000256" key="5">
    <source>
        <dbReference type="SAM" id="MobiDB-lite"/>
    </source>
</evidence>
<evidence type="ECO:0000305" key="6"/>
<reference key="1">
    <citation type="journal article" date="2007" name="PLoS ONE">
        <title>Molecular correlates of host specialization in Staphylococcus aureus.</title>
        <authorList>
            <person name="Herron-Olson L."/>
            <person name="Fitzgerald J.R."/>
            <person name="Musser J.M."/>
            <person name="Kapur V."/>
        </authorList>
    </citation>
    <scope>NUCLEOTIDE SEQUENCE [LARGE SCALE GENOMIC DNA]</scope>
    <source>
        <strain>bovine RF122 / ET3-1</strain>
    </source>
</reference>
<proteinExistence type="inferred from homology"/>
<protein>
    <recommendedName>
        <fullName>Iron-regulated surface determinant protein C</fullName>
    </recommendedName>
    <alternativeName>
        <fullName>Staphylococcal iron-regulated protein D</fullName>
    </alternativeName>
</protein>
<dbReference type="EMBL" id="AJ938182">
    <property type="protein sequence ID" value="CAI80683.1"/>
    <property type="molecule type" value="Genomic_DNA"/>
</dbReference>
<dbReference type="RefSeq" id="WP_000789826.1">
    <property type="nucleotide sequence ID" value="NC_007622.1"/>
</dbReference>
<dbReference type="SMR" id="Q2YX94"/>
<dbReference type="KEGG" id="sab:SAB0995"/>
<dbReference type="HOGENOM" id="CLU_092243_1_0_9"/>
<dbReference type="GO" id="GO:0005576">
    <property type="term" value="C:extracellular region"/>
    <property type="evidence" value="ECO:0007669"/>
    <property type="project" value="UniProtKB-KW"/>
</dbReference>
<dbReference type="GO" id="GO:0009274">
    <property type="term" value="C:peptidoglycan-based cell wall"/>
    <property type="evidence" value="ECO:0007669"/>
    <property type="project" value="InterPro"/>
</dbReference>
<dbReference type="GO" id="GO:0030492">
    <property type="term" value="F:hemoglobin binding"/>
    <property type="evidence" value="ECO:0007669"/>
    <property type="project" value="InterPro"/>
</dbReference>
<dbReference type="GO" id="GO:0046872">
    <property type="term" value="F:metal ion binding"/>
    <property type="evidence" value="ECO:0007669"/>
    <property type="project" value="UniProtKB-KW"/>
</dbReference>
<dbReference type="GO" id="GO:0015886">
    <property type="term" value="P:heme transport"/>
    <property type="evidence" value="ECO:0007669"/>
    <property type="project" value="InterPro"/>
</dbReference>
<dbReference type="CDD" id="cd06920">
    <property type="entry name" value="NEAT"/>
    <property type="match status" value="1"/>
</dbReference>
<dbReference type="Gene3D" id="2.60.40.1850">
    <property type="match status" value="1"/>
</dbReference>
<dbReference type="InterPro" id="IPR019909">
    <property type="entry name" value="Haem_uptake_protein_IsdC"/>
</dbReference>
<dbReference type="InterPro" id="IPR050436">
    <property type="entry name" value="IsdA"/>
</dbReference>
<dbReference type="InterPro" id="IPR006635">
    <property type="entry name" value="NEAT_dom"/>
</dbReference>
<dbReference type="InterPro" id="IPR037250">
    <property type="entry name" value="NEAT_dom_sf"/>
</dbReference>
<dbReference type="InterPro" id="IPR017505">
    <property type="entry name" value="Sortase_SrtB_sig_NPQTN"/>
</dbReference>
<dbReference type="NCBIfam" id="TIGR03656">
    <property type="entry name" value="IsdC"/>
    <property type="match status" value="1"/>
</dbReference>
<dbReference type="NCBIfam" id="TIGR03068">
    <property type="entry name" value="srtB_sig_NPQTN"/>
    <property type="match status" value="1"/>
</dbReference>
<dbReference type="PANTHER" id="PTHR37824">
    <property type="entry name" value="IRON-REGULATED SURFACE DETERMINANT PROTEIN C"/>
    <property type="match status" value="1"/>
</dbReference>
<dbReference type="PANTHER" id="PTHR37824:SF1">
    <property type="entry name" value="IRON-REGULATED SURFACE DETERMINANT PROTEIN C"/>
    <property type="match status" value="1"/>
</dbReference>
<dbReference type="Pfam" id="PF05031">
    <property type="entry name" value="NEAT"/>
    <property type="match status" value="1"/>
</dbReference>
<dbReference type="SMART" id="SM00725">
    <property type="entry name" value="NEAT"/>
    <property type="match status" value="1"/>
</dbReference>
<dbReference type="SUPFAM" id="SSF158911">
    <property type="entry name" value="NEAT domain-like"/>
    <property type="match status" value="1"/>
</dbReference>
<dbReference type="PROSITE" id="PS50978">
    <property type="entry name" value="NEAT"/>
    <property type="match status" value="1"/>
</dbReference>
<feature type="signal peptide" evidence="3">
    <location>
        <begin position="1"/>
        <end position="28"/>
    </location>
</feature>
<feature type="chain" id="PRO_0000292561" description="Iron-regulated surface determinant protein C">
    <location>
        <begin position="29"/>
        <end position="192"/>
    </location>
</feature>
<feature type="propeptide" id="PRO_0000292562" description="Removed by sortase B" evidence="2">
    <location>
        <begin position="193"/>
        <end position="227"/>
    </location>
</feature>
<feature type="domain" description="NEAT" evidence="4">
    <location>
        <begin position="29"/>
        <end position="150"/>
    </location>
</feature>
<feature type="region of interest" description="Disordered" evidence="5">
    <location>
        <begin position="149"/>
        <end position="191"/>
    </location>
</feature>
<feature type="short sequence motif" description="NPQTN sorting signal" evidence="2">
    <location>
        <begin position="189"/>
        <end position="193"/>
    </location>
</feature>
<feature type="compositionally biased region" description="Low complexity" evidence="5">
    <location>
        <begin position="161"/>
        <end position="172"/>
    </location>
</feature>
<feature type="compositionally biased region" description="Polar residues" evidence="5">
    <location>
        <begin position="173"/>
        <end position="182"/>
    </location>
</feature>
<feature type="binding site" evidence="2">
    <location>
        <position position="47"/>
    </location>
    <ligand>
        <name>heme</name>
        <dbReference type="ChEBI" id="CHEBI:30413"/>
    </ligand>
</feature>
<feature type="binding site" evidence="2">
    <location>
        <position position="48"/>
    </location>
    <ligand>
        <name>heme</name>
        <dbReference type="ChEBI" id="CHEBI:30413"/>
    </ligand>
</feature>
<feature type="binding site" description="axial binding residue" evidence="1">
    <location>
        <position position="132"/>
    </location>
    <ligand>
        <name>heme</name>
        <dbReference type="ChEBI" id="CHEBI:30413"/>
    </ligand>
    <ligandPart>
        <name>Fe</name>
        <dbReference type="ChEBI" id="CHEBI:18248"/>
    </ligandPart>
</feature>
<feature type="binding site" evidence="2">
    <location>
        <position position="136"/>
    </location>
    <ligand>
        <name>heme</name>
        <dbReference type="ChEBI" id="CHEBI:30413"/>
    </ligand>
</feature>
<feature type="modified residue" description="Pentaglycyl murein peptidoglycan amidated threonine" evidence="2">
    <location>
        <position position="192"/>
    </location>
</feature>
<sequence length="227" mass="24811">MKNILKVFNTTILALIIIIATFSNSANAADSGTLNYEVYKYNTNDTSIANDYFNKPAKYIKKNGKLYVQITVNHSHWITGMSIEGHKENIISKNTAKDERTSEFEVSKLNGKVDGKIDVYIDEKVNGKPFKYDHHYNITYKFNGPTDVAGANAPGKDDKNSASGSDKGSDGATTGQSESNSSNKDKVENPQTNAGTPAYIYAIPVASLALLIAITLFVRKKSKGNVE</sequence>
<name>ISDC_STAAB</name>
<comment type="function">
    <text evidence="1">Involved in heme (porphyrin) scavenging. Binds hemoglobin and almost exclusively free-base protoporphyrin IX. Probably has a role as the central conduit of the isd heme uptake system, i.e. mediates the transfer of the iron-containing nutrient from IsdABH to the membrane translocation system IsdDEF. Hemin-free IsdC (apo-IsdC) acquires hemin from hemin-containing IsdA (holo-IsdA) probably through the activated holo-IsdA-apo-IsdC complex and due to the higher affinity of apo-IsdC for the cofactor. The reaction is reversible (By similarity).</text>
</comment>
<comment type="subunit">
    <text evidence="1">Monomer. Interacts with IsdA (By similarity).</text>
</comment>
<comment type="subcellular location">
    <subcellularLocation>
        <location evidence="1">Secreted</location>
        <location evidence="1">Cell wall</location>
        <topology evidence="1">Peptidoglycan-anchor</topology>
    </subcellularLocation>
    <text evidence="2">Anchored to the cell wall by sortase B (By similarity).</text>
</comment>
<comment type="induction">
    <text evidence="1">Repressed by fur in the presence of iron.</text>
</comment>
<comment type="domain">
    <text evidence="1">The NEAT domain binds Fe(3+) heme iron. Reduction of the high-spin Fe(3+) heme iron to high-spin Fe(2+) results in loss of the heme from the binding site of the protein due to the absence of a proximal histidine (By similarity).</text>
</comment>
<comment type="similarity">
    <text evidence="6">Belongs to the IsdC family.</text>
</comment>